<feature type="chain" id="PRO_0000399615" description="Respiratory supercomplex factor 1, mitochondrial">
    <location>
        <begin position="1"/>
        <end position="178"/>
    </location>
</feature>
<feature type="transmembrane region" description="Helical" evidence="2">
    <location>
        <begin position="33"/>
        <end position="49"/>
    </location>
</feature>
<feature type="transmembrane region" description="Helical" evidence="2">
    <location>
        <begin position="69"/>
        <end position="86"/>
    </location>
</feature>
<feature type="domain" description="HIG1" evidence="2">
    <location>
        <begin position="6"/>
        <end position="97"/>
    </location>
</feature>
<feature type="region of interest" description="Disordered" evidence="3">
    <location>
        <begin position="136"/>
        <end position="157"/>
    </location>
</feature>
<feature type="compositionally biased region" description="Basic and acidic residues" evidence="3">
    <location>
        <begin position="136"/>
        <end position="151"/>
    </location>
</feature>
<name>RCF1_ASPCL</name>
<accession>A1CHC5</accession>
<sequence length="178" mass="20722">MDQEPIPSSLEDNPQFKEETSLQKFRRRFKEEPLIPLGCAATSYALYRAYRSMKAGDSVEMNKMFRARIYAQFFTLIAVVAGGMYFKTERQQRREFEKMVEQRKAQEKRDAWLRELEVRDKEDKDWRERHAAMEAAAKEAGKRKSVPEQDAARSAIEPADEKSIGVLAAVRELLARQN</sequence>
<protein>
    <recommendedName>
        <fullName>Respiratory supercomplex factor 1, mitochondrial</fullName>
    </recommendedName>
</protein>
<keyword id="KW-0472">Membrane</keyword>
<keyword id="KW-0496">Mitochondrion</keyword>
<keyword id="KW-1185">Reference proteome</keyword>
<keyword id="KW-0812">Transmembrane</keyword>
<keyword id="KW-1133">Transmembrane helix</keyword>
<dbReference type="EMBL" id="DS027054">
    <property type="protein sequence ID" value="EAW10280.1"/>
    <property type="molecule type" value="Genomic_DNA"/>
</dbReference>
<dbReference type="RefSeq" id="XP_001271706.1">
    <property type="nucleotide sequence ID" value="XM_001271705.1"/>
</dbReference>
<dbReference type="SMR" id="A1CHC5"/>
<dbReference type="STRING" id="344612.A1CHC5"/>
<dbReference type="EnsemblFungi" id="EAW10280">
    <property type="protein sequence ID" value="EAW10280"/>
    <property type="gene ID" value="ACLA_047490"/>
</dbReference>
<dbReference type="GeneID" id="4704209"/>
<dbReference type="KEGG" id="act:ACLA_047490"/>
<dbReference type="VEuPathDB" id="FungiDB:ACLA_047490"/>
<dbReference type="eggNOG" id="KOG4431">
    <property type="taxonomic scope" value="Eukaryota"/>
</dbReference>
<dbReference type="HOGENOM" id="CLU_087356_0_2_1"/>
<dbReference type="OMA" id="YYRTERT"/>
<dbReference type="OrthoDB" id="6604018at2759"/>
<dbReference type="Proteomes" id="UP000006701">
    <property type="component" value="Unassembled WGS sequence"/>
</dbReference>
<dbReference type="GO" id="GO:0031966">
    <property type="term" value="C:mitochondrial membrane"/>
    <property type="evidence" value="ECO:0007669"/>
    <property type="project" value="UniProtKB-SubCell"/>
</dbReference>
<dbReference type="GO" id="GO:0097250">
    <property type="term" value="P:mitochondrial respirasome assembly"/>
    <property type="evidence" value="ECO:0007669"/>
    <property type="project" value="TreeGrafter"/>
</dbReference>
<dbReference type="Gene3D" id="6.10.140.1320">
    <property type="match status" value="1"/>
</dbReference>
<dbReference type="InterPro" id="IPR007667">
    <property type="entry name" value="Hypoxia_induced_domain"/>
</dbReference>
<dbReference type="InterPro" id="IPR050355">
    <property type="entry name" value="RCF1"/>
</dbReference>
<dbReference type="PANTHER" id="PTHR12297:SF3">
    <property type="entry name" value="HIG1 DOMAIN FAMILY MEMBER 1A"/>
    <property type="match status" value="1"/>
</dbReference>
<dbReference type="PANTHER" id="PTHR12297">
    <property type="entry name" value="HYPOXIA-INDUCBILE GENE 1 HIG1 -RELATED"/>
    <property type="match status" value="1"/>
</dbReference>
<dbReference type="Pfam" id="PF04588">
    <property type="entry name" value="HIG_1_N"/>
    <property type="match status" value="1"/>
</dbReference>
<dbReference type="PROSITE" id="PS51503">
    <property type="entry name" value="HIG1"/>
    <property type="match status" value="1"/>
</dbReference>
<proteinExistence type="inferred from homology"/>
<evidence type="ECO:0000250" key="1"/>
<evidence type="ECO:0000255" key="2">
    <source>
        <dbReference type="PROSITE-ProRule" id="PRU00836"/>
    </source>
</evidence>
<evidence type="ECO:0000256" key="3">
    <source>
        <dbReference type="SAM" id="MobiDB-lite"/>
    </source>
</evidence>
<evidence type="ECO:0000305" key="4"/>
<reference key="1">
    <citation type="journal article" date="2008" name="PLoS Genet.">
        <title>Genomic islands in the pathogenic filamentous fungus Aspergillus fumigatus.</title>
        <authorList>
            <person name="Fedorova N.D."/>
            <person name="Khaldi N."/>
            <person name="Joardar V.S."/>
            <person name="Maiti R."/>
            <person name="Amedeo P."/>
            <person name="Anderson M.J."/>
            <person name="Crabtree J."/>
            <person name="Silva J.C."/>
            <person name="Badger J.H."/>
            <person name="Albarraq A."/>
            <person name="Angiuoli S."/>
            <person name="Bussey H."/>
            <person name="Bowyer P."/>
            <person name="Cotty P.J."/>
            <person name="Dyer P.S."/>
            <person name="Egan A."/>
            <person name="Galens K."/>
            <person name="Fraser-Liggett C.M."/>
            <person name="Haas B.J."/>
            <person name="Inman J.M."/>
            <person name="Kent R."/>
            <person name="Lemieux S."/>
            <person name="Malavazi I."/>
            <person name="Orvis J."/>
            <person name="Roemer T."/>
            <person name="Ronning C.M."/>
            <person name="Sundaram J.P."/>
            <person name="Sutton G."/>
            <person name="Turner G."/>
            <person name="Venter J.C."/>
            <person name="White O.R."/>
            <person name="Whitty B.R."/>
            <person name="Youngman P."/>
            <person name="Wolfe K.H."/>
            <person name="Goldman G.H."/>
            <person name="Wortman J.R."/>
            <person name="Jiang B."/>
            <person name="Denning D.W."/>
            <person name="Nierman W.C."/>
        </authorList>
    </citation>
    <scope>NUCLEOTIDE SEQUENCE [LARGE SCALE GENOMIC DNA]</scope>
    <source>
        <strain>ATCC 1007 / CBS 513.65 / DSM 816 / NCTC 3887 / NRRL 1 / QM 1276 / 107</strain>
    </source>
</reference>
<comment type="function">
    <text evidence="1">Cytochrome c oxidase subunit which plays a role in assembly of respiratory supercomplexes.</text>
</comment>
<comment type="subunit">
    <text evidence="1">Associates with the respiratory chain complex III/complex IV supercomplex.</text>
</comment>
<comment type="subcellular location">
    <subcellularLocation>
        <location evidence="2">Mitochondrion membrane</location>
        <topology evidence="2">Multi-pass membrane protein</topology>
    </subcellularLocation>
</comment>
<comment type="similarity">
    <text evidence="4">Belongs to the RCF1 family.</text>
</comment>
<organism>
    <name type="scientific">Aspergillus clavatus (strain ATCC 1007 / CBS 513.65 / DSM 816 / NCTC 3887 / NRRL 1 / QM 1276 / 107)</name>
    <dbReference type="NCBI Taxonomy" id="344612"/>
    <lineage>
        <taxon>Eukaryota</taxon>
        <taxon>Fungi</taxon>
        <taxon>Dikarya</taxon>
        <taxon>Ascomycota</taxon>
        <taxon>Pezizomycotina</taxon>
        <taxon>Eurotiomycetes</taxon>
        <taxon>Eurotiomycetidae</taxon>
        <taxon>Eurotiales</taxon>
        <taxon>Aspergillaceae</taxon>
        <taxon>Aspergillus</taxon>
        <taxon>Aspergillus subgen. Fumigati</taxon>
    </lineage>
</organism>
<gene>
    <name type="primary">rcf1</name>
    <name type="synonym">aim31</name>
    <name type="ORF">ACLA_047490</name>
</gene>